<feature type="chain" id="PRO_1000134515" description="Acetyl-coenzyme A carboxylase carboxyl transferase subunit alpha">
    <location>
        <begin position="1"/>
        <end position="319"/>
    </location>
</feature>
<feature type="domain" description="CoA carboxyltransferase C-terminal" evidence="2">
    <location>
        <begin position="35"/>
        <end position="296"/>
    </location>
</feature>
<gene>
    <name evidence="1" type="primary">accA</name>
    <name type="ordered locus">SeD_A0254</name>
</gene>
<comment type="function">
    <text evidence="1">Component of the acetyl coenzyme A carboxylase (ACC) complex. First, biotin carboxylase catalyzes the carboxylation of biotin on its carrier protein (BCCP) and then the CO(2) group is transferred by the carboxyltransferase to acetyl-CoA to form malonyl-CoA.</text>
</comment>
<comment type="catalytic activity">
    <reaction evidence="1">
        <text>N(6)-carboxybiotinyl-L-lysyl-[protein] + acetyl-CoA = N(6)-biotinyl-L-lysyl-[protein] + malonyl-CoA</text>
        <dbReference type="Rhea" id="RHEA:54728"/>
        <dbReference type="Rhea" id="RHEA-COMP:10505"/>
        <dbReference type="Rhea" id="RHEA-COMP:10506"/>
        <dbReference type="ChEBI" id="CHEBI:57288"/>
        <dbReference type="ChEBI" id="CHEBI:57384"/>
        <dbReference type="ChEBI" id="CHEBI:83144"/>
        <dbReference type="ChEBI" id="CHEBI:83145"/>
        <dbReference type="EC" id="2.1.3.15"/>
    </reaction>
</comment>
<comment type="pathway">
    <text evidence="1">Lipid metabolism; malonyl-CoA biosynthesis; malonyl-CoA from acetyl-CoA: step 1/1.</text>
</comment>
<comment type="subunit">
    <text evidence="1">Acetyl-CoA carboxylase is a heterohexamer composed of biotin carboxyl carrier protein (AccB), biotin carboxylase (AccC) and two subunits each of ACCase subunit alpha (AccA) and ACCase subunit beta (AccD).</text>
</comment>
<comment type="subcellular location">
    <subcellularLocation>
        <location evidence="1">Cytoplasm</location>
    </subcellularLocation>
</comment>
<comment type="similarity">
    <text evidence="1">Belongs to the AccA family.</text>
</comment>
<keyword id="KW-0067">ATP-binding</keyword>
<keyword id="KW-0963">Cytoplasm</keyword>
<keyword id="KW-0275">Fatty acid biosynthesis</keyword>
<keyword id="KW-0276">Fatty acid metabolism</keyword>
<keyword id="KW-0444">Lipid biosynthesis</keyword>
<keyword id="KW-0443">Lipid metabolism</keyword>
<keyword id="KW-0547">Nucleotide-binding</keyword>
<keyword id="KW-0808">Transferase</keyword>
<evidence type="ECO:0000255" key="1">
    <source>
        <dbReference type="HAMAP-Rule" id="MF_00823"/>
    </source>
</evidence>
<evidence type="ECO:0000255" key="2">
    <source>
        <dbReference type="PROSITE-ProRule" id="PRU01137"/>
    </source>
</evidence>
<dbReference type="EC" id="2.1.3.15" evidence="1"/>
<dbReference type="EMBL" id="CP001144">
    <property type="protein sequence ID" value="ACH74057.1"/>
    <property type="molecule type" value="Genomic_DNA"/>
</dbReference>
<dbReference type="RefSeq" id="WP_000055754.1">
    <property type="nucleotide sequence ID" value="NC_011205.1"/>
</dbReference>
<dbReference type="SMR" id="B5FJ32"/>
<dbReference type="KEGG" id="sed:SeD_A0254"/>
<dbReference type="HOGENOM" id="CLU_015486_0_2_6"/>
<dbReference type="UniPathway" id="UPA00655">
    <property type="reaction ID" value="UER00711"/>
</dbReference>
<dbReference type="Proteomes" id="UP000008322">
    <property type="component" value="Chromosome"/>
</dbReference>
<dbReference type="GO" id="GO:0009317">
    <property type="term" value="C:acetyl-CoA carboxylase complex"/>
    <property type="evidence" value="ECO:0007669"/>
    <property type="project" value="InterPro"/>
</dbReference>
<dbReference type="GO" id="GO:0003989">
    <property type="term" value="F:acetyl-CoA carboxylase activity"/>
    <property type="evidence" value="ECO:0007669"/>
    <property type="project" value="InterPro"/>
</dbReference>
<dbReference type="GO" id="GO:0005524">
    <property type="term" value="F:ATP binding"/>
    <property type="evidence" value="ECO:0007669"/>
    <property type="project" value="UniProtKB-KW"/>
</dbReference>
<dbReference type="GO" id="GO:0016743">
    <property type="term" value="F:carboxyl- or carbamoyltransferase activity"/>
    <property type="evidence" value="ECO:0007669"/>
    <property type="project" value="UniProtKB-UniRule"/>
</dbReference>
<dbReference type="GO" id="GO:0006633">
    <property type="term" value="P:fatty acid biosynthetic process"/>
    <property type="evidence" value="ECO:0007669"/>
    <property type="project" value="UniProtKB-KW"/>
</dbReference>
<dbReference type="GO" id="GO:2001295">
    <property type="term" value="P:malonyl-CoA biosynthetic process"/>
    <property type="evidence" value="ECO:0007669"/>
    <property type="project" value="UniProtKB-UniRule"/>
</dbReference>
<dbReference type="FunFam" id="3.90.226.10:FF:000008">
    <property type="entry name" value="Acetyl-coenzyme A carboxylase carboxyl transferase subunit alpha"/>
    <property type="match status" value="1"/>
</dbReference>
<dbReference type="Gene3D" id="3.90.226.10">
    <property type="entry name" value="2-enoyl-CoA Hydratase, Chain A, domain 1"/>
    <property type="match status" value="1"/>
</dbReference>
<dbReference type="HAMAP" id="MF_00823">
    <property type="entry name" value="AcetylCoA_CT_alpha"/>
    <property type="match status" value="1"/>
</dbReference>
<dbReference type="InterPro" id="IPR001095">
    <property type="entry name" value="Acetyl_CoA_COase_a_su"/>
</dbReference>
<dbReference type="InterPro" id="IPR029045">
    <property type="entry name" value="ClpP/crotonase-like_dom_sf"/>
</dbReference>
<dbReference type="InterPro" id="IPR011763">
    <property type="entry name" value="COA_CT_C"/>
</dbReference>
<dbReference type="NCBIfam" id="TIGR00513">
    <property type="entry name" value="accA"/>
    <property type="match status" value="1"/>
</dbReference>
<dbReference type="NCBIfam" id="NF041504">
    <property type="entry name" value="AccA_sub"/>
    <property type="match status" value="1"/>
</dbReference>
<dbReference type="NCBIfam" id="NF004344">
    <property type="entry name" value="PRK05724.1"/>
    <property type="match status" value="1"/>
</dbReference>
<dbReference type="PANTHER" id="PTHR42853">
    <property type="entry name" value="ACETYL-COENZYME A CARBOXYLASE CARBOXYL TRANSFERASE SUBUNIT ALPHA"/>
    <property type="match status" value="1"/>
</dbReference>
<dbReference type="PANTHER" id="PTHR42853:SF3">
    <property type="entry name" value="ACETYL-COENZYME A CARBOXYLASE CARBOXYL TRANSFERASE SUBUNIT ALPHA, CHLOROPLASTIC"/>
    <property type="match status" value="1"/>
</dbReference>
<dbReference type="Pfam" id="PF03255">
    <property type="entry name" value="ACCA"/>
    <property type="match status" value="1"/>
</dbReference>
<dbReference type="PRINTS" id="PR01069">
    <property type="entry name" value="ACCCTRFRASEA"/>
</dbReference>
<dbReference type="SUPFAM" id="SSF52096">
    <property type="entry name" value="ClpP/crotonase"/>
    <property type="match status" value="1"/>
</dbReference>
<dbReference type="PROSITE" id="PS50989">
    <property type="entry name" value="COA_CT_CTER"/>
    <property type="match status" value="1"/>
</dbReference>
<sequence length="319" mass="35343">MSLNFLDFEQPIAELEAKIDSLTAVSRQDEKLDINIDEEVHRLREKSVELTRKIFADLGAWQVAQLARHPQRPYTLDYVRLAFDEFDELAGDRAYADDKAIVGGIARLEGRPVMIIGHQKGRETKEKIRRNFGMPAPEGYRKALRLMEMAERFNMPIITFIDTPGAYPGVGAEERGQSEAIARNLREMSRLNVPVICTVIGEGGSGGALAIGVGDKVNMLQYSTYSVISPEGCASILWKSANKAPLAAEAMGIIAPRLKELKLIDSIIPEPLGGAHRNPEAMAASLKAQLLEDLADLDVLSTDDLKNRRYQRLMSYGYA</sequence>
<organism>
    <name type="scientific">Salmonella dublin (strain CT_02021853)</name>
    <dbReference type="NCBI Taxonomy" id="439851"/>
    <lineage>
        <taxon>Bacteria</taxon>
        <taxon>Pseudomonadati</taxon>
        <taxon>Pseudomonadota</taxon>
        <taxon>Gammaproteobacteria</taxon>
        <taxon>Enterobacterales</taxon>
        <taxon>Enterobacteriaceae</taxon>
        <taxon>Salmonella</taxon>
    </lineage>
</organism>
<proteinExistence type="inferred from homology"/>
<reference key="1">
    <citation type="journal article" date="2011" name="J. Bacteriol.">
        <title>Comparative genomics of 28 Salmonella enterica isolates: evidence for CRISPR-mediated adaptive sublineage evolution.</title>
        <authorList>
            <person name="Fricke W.F."/>
            <person name="Mammel M.K."/>
            <person name="McDermott P.F."/>
            <person name="Tartera C."/>
            <person name="White D.G."/>
            <person name="Leclerc J.E."/>
            <person name="Ravel J."/>
            <person name="Cebula T.A."/>
        </authorList>
    </citation>
    <scope>NUCLEOTIDE SEQUENCE [LARGE SCALE GENOMIC DNA]</scope>
    <source>
        <strain>CT_02021853</strain>
    </source>
</reference>
<protein>
    <recommendedName>
        <fullName evidence="1">Acetyl-coenzyme A carboxylase carboxyl transferase subunit alpha</fullName>
        <shortName evidence="1">ACCase subunit alpha</shortName>
        <shortName evidence="1">Acetyl-CoA carboxylase carboxyltransferase subunit alpha</shortName>
        <ecNumber evidence="1">2.1.3.15</ecNumber>
    </recommendedName>
</protein>
<accession>B5FJ32</accession>
<name>ACCA_SALDC</name>